<accession>Q32EM3</accession>
<proteinExistence type="inferred from homology"/>
<sequence length="294" mass="31497">MHPRFQTAFAQLADNLQSALEPILADKYFPALLTGEQVSSLKSATGLDEDALAFALLPLAAACALTPLSNFNVGAIARGVSGTWYFGANMEFIGATMQQTVHAEQSAISHAWLSGEKALAAITVNYTPCGHCRQFMNELNSGLDLRIHLPGREAHALRDYLPDAFGPKDLEIKTLLMDEQDHGYALTGDALSQAAIAAANRSHMPYSKSPSGVALECKDGRIFSGSYAENAAFNPTLPPLQGALILLNLKGYDYPDIQRAVLAEKADAPLIQWDATSATLKALGCHSIDRVLLA</sequence>
<gene>
    <name evidence="1" type="primary">cdd</name>
    <name type="ordered locus">SDY_2144</name>
</gene>
<keyword id="KW-0378">Hydrolase</keyword>
<keyword id="KW-0479">Metal-binding</keyword>
<keyword id="KW-1185">Reference proteome</keyword>
<keyword id="KW-0862">Zinc</keyword>
<feature type="chain" id="PRO_0000171666" description="Cytidine deaminase">
    <location>
        <begin position="1"/>
        <end position="294"/>
    </location>
</feature>
<feature type="domain" description="CMP/dCMP-type deaminase 1" evidence="2">
    <location>
        <begin position="48"/>
        <end position="168"/>
    </location>
</feature>
<feature type="domain" description="CMP/dCMP-type deaminase 2" evidence="2">
    <location>
        <begin position="186"/>
        <end position="294"/>
    </location>
</feature>
<feature type="active site" description="Proton donor" evidence="1">
    <location>
        <position position="104"/>
    </location>
</feature>
<feature type="binding site" evidence="1">
    <location>
        <begin position="89"/>
        <end position="91"/>
    </location>
    <ligand>
        <name>substrate</name>
    </ligand>
</feature>
<feature type="binding site" evidence="1">
    <location>
        <position position="102"/>
    </location>
    <ligand>
        <name>Zn(2+)</name>
        <dbReference type="ChEBI" id="CHEBI:29105"/>
        <note>catalytic</note>
    </ligand>
</feature>
<feature type="binding site" evidence="1">
    <location>
        <position position="129"/>
    </location>
    <ligand>
        <name>Zn(2+)</name>
        <dbReference type="ChEBI" id="CHEBI:29105"/>
        <note>catalytic</note>
    </ligand>
</feature>
<feature type="binding site" evidence="1">
    <location>
        <position position="132"/>
    </location>
    <ligand>
        <name>Zn(2+)</name>
        <dbReference type="ChEBI" id="CHEBI:29105"/>
        <note>catalytic</note>
    </ligand>
</feature>
<name>CDD_SHIDS</name>
<reference key="1">
    <citation type="journal article" date="2005" name="Nucleic Acids Res.">
        <title>Genome dynamics and diversity of Shigella species, the etiologic agents of bacillary dysentery.</title>
        <authorList>
            <person name="Yang F."/>
            <person name="Yang J."/>
            <person name="Zhang X."/>
            <person name="Chen L."/>
            <person name="Jiang Y."/>
            <person name="Yan Y."/>
            <person name="Tang X."/>
            <person name="Wang J."/>
            <person name="Xiong Z."/>
            <person name="Dong J."/>
            <person name="Xue Y."/>
            <person name="Zhu Y."/>
            <person name="Xu X."/>
            <person name="Sun L."/>
            <person name="Chen S."/>
            <person name="Nie H."/>
            <person name="Peng J."/>
            <person name="Xu J."/>
            <person name="Wang Y."/>
            <person name="Yuan Z."/>
            <person name="Wen Y."/>
            <person name="Yao Z."/>
            <person name="Shen Y."/>
            <person name="Qiang B."/>
            <person name="Hou Y."/>
            <person name="Yu J."/>
            <person name="Jin Q."/>
        </authorList>
    </citation>
    <scope>NUCLEOTIDE SEQUENCE [LARGE SCALE GENOMIC DNA]</scope>
    <source>
        <strain>Sd197</strain>
    </source>
</reference>
<dbReference type="EC" id="3.5.4.5" evidence="1"/>
<dbReference type="EMBL" id="CP000034">
    <property type="protein sequence ID" value="ABB62232.1"/>
    <property type="molecule type" value="Genomic_DNA"/>
</dbReference>
<dbReference type="RefSeq" id="WP_000553543.1">
    <property type="nucleotide sequence ID" value="NC_007606.1"/>
</dbReference>
<dbReference type="RefSeq" id="YP_403723.1">
    <property type="nucleotide sequence ID" value="NC_007606.1"/>
</dbReference>
<dbReference type="SMR" id="Q32EM3"/>
<dbReference type="STRING" id="300267.SDY_2144"/>
<dbReference type="EnsemblBacteria" id="ABB62232">
    <property type="protein sequence ID" value="ABB62232"/>
    <property type="gene ID" value="SDY_2144"/>
</dbReference>
<dbReference type="KEGG" id="sdy:SDY_2144"/>
<dbReference type="PATRIC" id="fig|300267.13.peg.2591"/>
<dbReference type="HOGENOM" id="CLU_052424_0_0_6"/>
<dbReference type="Proteomes" id="UP000002716">
    <property type="component" value="Chromosome"/>
</dbReference>
<dbReference type="GO" id="GO:0005829">
    <property type="term" value="C:cytosol"/>
    <property type="evidence" value="ECO:0007669"/>
    <property type="project" value="TreeGrafter"/>
</dbReference>
<dbReference type="GO" id="GO:0004126">
    <property type="term" value="F:cytidine deaminase activity"/>
    <property type="evidence" value="ECO:0007669"/>
    <property type="project" value="UniProtKB-UniRule"/>
</dbReference>
<dbReference type="GO" id="GO:0042802">
    <property type="term" value="F:identical protein binding"/>
    <property type="evidence" value="ECO:0007669"/>
    <property type="project" value="UniProtKB-ARBA"/>
</dbReference>
<dbReference type="GO" id="GO:0008270">
    <property type="term" value="F:zinc ion binding"/>
    <property type="evidence" value="ECO:0007669"/>
    <property type="project" value="UniProtKB-UniRule"/>
</dbReference>
<dbReference type="GO" id="GO:0009972">
    <property type="term" value="P:cytidine deamination"/>
    <property type="evidence" value="ECO:0007669"/>
    <property type="project" value="InterPro"/>
</dbReference>
<dbReference type="CDD" id="cd01283">
    <property type="entry name" value="cytidine_deaminase"/>
    <property type="match status" value="2"/>
</dbReference>
<dbReference type="FunFam" id="3.40.140.10:FF:000006">
    <property type="entry name" value="Cytidine deaminase"/>
    <property type="match status" value="1"/>
</dbReference>
<dbReference type="FunFam" id="3.40.140.10:FF:000007">
    <property type="entry name" value="Cytidine deaminase"/>
    <property type="match status" value="1"/>
</dbReference>
<dbReference type="Gene3D" id="3.40.140.10">
    <property type="entry name" value="Cytidine Deaminase, domain 2"/>
    <property type="match status" value="2"/>
</dbReference>
<dbReference type="HAMAP" id="MF_01558">
    <property type="entry name" value="Cyt_deam"/>
    <property type="match status" value="1"/>
</dbReference>
<dbReference type="InterPro" id="IPR016192">
    <property type="entry name" value="APOBEC/CMP_deaminase_Zn-bd"/>
</dbReference>
<dbReference type="InterPro" id="IPR002125">
    <property type="entry name" value="CMP_dCMP_dom"/>
</dbReference>
<dbReference type="InterPro" id="IPR013171">
    <property type="entry name" value="Cyd/dCyd_deaminase_Zn-bd"/>
</dbReference>
<dbReference type="InterPro" id="IPR050202">
    <property type="entry name" value="Cyt/Deoxycyt_deaminase"/>
</dbReference>
<dbReference type="InterPro" id="IPR006263">
    <property type="entry name" value="Cyt_deam_dimer"/>
</dbReference>
<dbReference type="InterPro" id="IPR016193">
    <property type="entry name" value="Cytidine_deaminase-like"/>
</dbReference>
<dbReference type="InterPro" id="IPR020797">
    <property type="entry name" value="Cytidine_deaminase_bacteria"/>
</dbReference>
<dbReference type="NCBIfam" id="TIGR01355">
    <property type="entry name" value="cyt_deam_dimer"/>
    <property type="match status" value="1"/>
</dbReference>
<dbReference type="NCBIfam" id="NF006537">
    <property type="entry name" value="PRK09027.1"/>
    <property type="match status" value="1"/>
</dbReference>
<dbReference type="PANTHER" id="PTHR11644">
    <property type="entry name" value="CYTIDINE DEAMINASE"/>
    <property type="match status" value="1"/>
</dbReference>
<dbReference type="PANTHER" id="PTHR11644:SF2">
    <property type="entry name" value="CYTIDINE DEAMINASE"/>
    <property type="match status" value="1"/>
</dbReference>
<dbReference type="Pfam" id="PF00383">
    <property type="entry name" value="dCMP_cyt_deam_1"/>
    <property type="match status" value="1"/>
</dbReference>
<dbReference type="Pfam" id="PF08211">
    <property type="entry name" value="dCMP_cyt_deam_2"/>
    <property type="match status" value="1"/>
</dbReference>
<dbReference type="PIRSF" id="PIRSF006334">
    <property type="entry name" value="Cdd_plus_pseudo"/>
    <property type="match status" value="1"/>
</dbReference>
<dbReference type="SUPFAM" id="SSF53927">
    <property type="entry name" value="Cytidine deaminase-like"/>
    <property type="match status" value="2"/>
</dbReference>
<dbReference type="PROSITE" id="PS00903">
    <property type="entry name" value="CYT_DCMP_DEAMINASES_1"/>
    <property type="match status" value="1"/>
</dbReference>
<dbReference type="PROSITE" id="PS51747">
    <property type="entry name" value="CYT_DCMP_DEAMINASES_2"/>
    <property type="match status" value="2"/>
</dbReference>
<evidence type="ECO:0000255" key="1">
    <source>
        <dbReference type="HAMAP-Rule" id="MF_01558"/>
    </source>
</evidence>
<evidence type="ECO:0000255" key="2">
    <source>
        <dbReference type="PROSITE-ProRule" id="PRU01083"/>
    </source>
</evidence>
<comment type="function">
    <text evidence="1">This enzyme scavenges exogenous and endogenous cytidine and 2'-deoxycytidine for UMP synthesis.</text>
</comment>
<comment type="catalytic activity">
    <reaction evidence="1">
        <text>cytidine + H2O + H(+) = uridine + NH4(+)</text>
        <dbReference type="Rhea" id="RHEA:16069"/>
        <dbReference type="ChEBI" id="CHEBI:15377"/>
        <dbReference type="ChEBI" id="CHEBI:15378"/>
        <dbReference type="ChEBI" id="CHEBI:16704"/>
        <dbReference type="ChEBI" id="CHEBI:17562"/>
        <dbReference type="ChEBI" id="CHEBI:28938"/>
        <dbReference type="EC" id="3.5.4.5"/>
    </reaction>
</comment>
<comment type="catalytic activity">
    <reaction evidence="1">
        <text>2'-deoxycytidine + H2O + H(+) = 2'-deoxyuridine + NH4(+)</text>
        <dbReference type="Rhea" id="RHEA:13433"/>
        <dbReference type="ChEBI" id="CHEBI:15377"/>
        <dbReference type="ChEBI" id="CHEBI:15378"/>
        <dbReference type="ChEBI" id="CHEBI:15698"/>
        <dbReference type="ChEBI" id="CHEBI:16450"/>
        <dbReference type="ChEBI" id="CHEBI:28938"/>
        <dbReference type="EC" id="3.5.4.5"/>
    </reaction>
</comment>
<comment type="cofactor">
    <cofactor evidence="1">
        <name>Zn(2+)</name>
        <dbReference type="ChEBI" id="CHEBI:29105"/>
    </cofactor>
    <text evidence="1">Binds 1 zinc ion.</text>
</comment>
<comment type="subunit">
    <text evidence="1">Homodimer.</text>
</comment>
<comment type="similarity">
    <text evidence="1">Belongs to the cytidine and deoxycytidylate deaminase family.</text>
</comment>
<organism>
    <name type="scientific">Shigella dysenteriae serotype 1 (strain Sd197)</name>
    <dbReference type="NCBI Taxonomy" id="300267"/>
    <lineage>
        <taxon>Bacteria</taxon>
        <taxon>Pseudomonadati</taxon>
        <taxon>Pseudomonadota</taxon>
        <taxon>Gammaproteobacteria</taxon>
        <taxon>Enterobacterales</taxon>
        <taxon>Enterobacteriaceae</taxon>
        <taxon>Shigella</taxon>
    </lineage>
</organism>
<protein>
    <recommendedName>
        <fullName evidence="1">Cytidine deaminase</fullName>
        <ecNumber evidence="1">3.5.4.5</ecNumber>
    </recommendedName>
    <alternativeName>
        <fullName evidence="1">Cytidine aminohydrolase</fullName>
        <shortName evidence="1">CDA</shortName>
    </alternativeName>
</protein>